<comment type="catalytic activity">
    <reaction evidence="1">
        <text>tRNA(Gly) + glycine + ATP = glycyl-tRNA(Gly) + AMP + diphosphate</text>
        <dbReference type="Rhea" id="RHEA:16013"/>
        <dbReference type="Rhea" id="RHEA-COMP:9664"/>
        <dbReference type="Rhea" id="RHEA-COMP:9683"/>
        <dbReference type="ChEBI" id="CHEBI:30616"/>
        <dbReference type="ChEBI" id="CHEBI:33019"/>
        <dbReference type="ChEBI" id="CHEBI:57305"/>
        <dbReference type="ChEBI" id="CHEBI:78442"/>
        <dbReference type="ChEBI" id="CHEBI:78522"/>
        <dbReference type="ChEBI" id="CHEBI:456215"/>
        <dbReference type="EC" id="6.1.1.14"/>
    </reaction>
</comment>
<comment type="subunit">
    <text evidence="1">Tetramer of two alpha and two beta subunits.</text>
</comment>
<comment type="subcellular location">
    <subcellularLocation>
        <location evidence="1">Cytoplasm</location>
    </subcellularLocation>
</comment>
<comment type="similarity">
    <text evidence="1">Belongs to the class-II aminoacyl-tRNA synthetase family.</text>
</comment>
<organism>
    <name type="scientific">Brucella suis (strain ATCC 23445 / NCTC 10510)</name>
    <dbReference type="NCBI Taxonomy" id="470137"/>
    <lineage>
        <taxon>Bacteria</taxon>
        <taxon>Pseudomonadati</taxon>
        <taxon>Pseudomonadota</taxon>
        <taxon>Alphaproteobacteria</taxon>
        <taxon>Hyphomicrobiales</taxon>
        <taxon>Brucellaceae</taxon>
        <taxon>Brucella/Ochrobactrum group</taxon>
        <taxon>Brucella</taxon>
    </lineage>
</organism>
<gene>
    <name evidence="1" type="primary">glyQ</name>
    <name type="ordered locus">BSUIS_A0429</name>
</gene>
<proteinExistence type="inferred from homology"/>
<name>SYGA_BRUSI</name>
<sequence>MHPTRSFQGLILTLHNYWAEHGCAILQPYDMEVGAGTFHPATTLRSLGPKPWKAAYVQPSRRPKDGRYGENPNRLQHYYQYQVLIKPSPPNLQDLYLGSLKAIGLDPTLHDVRFVEDDWESPTLGAWGLGWECWCDGMEVSQFTYFQQVCGIECSPVAGELTYGLERLAMYVQGVDNVYDLNFNGLEGDEKVTYGDVFLQAEQEYSRYNFEMANTETLHQHFIDAERECEAILKAGSTGENSLHKCVFPAYDQCIKASHVFNLMDARGVISVTERQSYILRVRNLARQCGEAFLLTDAGGFNFKREGE</sequence>
<reference key="1">
    <citation type="submission" date="2007-12" db="EMBL/GenBank/DDBJ databases">
        <title>Brucella suis ATCC 23445 whole genome shotgun sequencing project.</title>
        <authorList>
            <person name="Setubal J.C."/>
            <person name="Bowns C."/>
            <person name="Boyle S."/>
            <person name="Crasta O.R."/>
            <person name="Czar M.J."/>
            <person name="Dharmanolla C."/>
            <person name="Gillespie J.J."/>
            <person name="Kenyon R.W."/>
            <person name="Lu J."/>
            <person name="Mane S."/>
            <person name="Mohapatra S."/>
            <person name="Nagrani S."/>
            <person name="Purkayastha A."/>
            <person name="Rajasimha H.K."/>
            <person name="Shallom J.M."/>
            <person name="Shallom S."/>
            <person name="Shukla M."/>
            <person name="Snyder E.E."/>
            <person name="Sobral B.W."/>
            <person name="Wattam A.R."/>
            <person name="Will R."/>
            <person name="Williams K."/>
            <person name="Yoo H."/>
            <person name="Bruce D."/>
            <person name="Detter C."/>
            <person name="Munk C."/>
            <person name="Brettin T.S."/>
        </authorList>
    </citation>
    <scope>NUCLEOTIDE SEQUENCE [LARGE SCALE GENOMIC DNA]</scope>
    <source>
        <strain>ATCC 23445 / NCTC 10510</strain>
    </source>
</reference>
<keyword id="KW-0030">Aminoacyl-tRNA synthetase</keyword>
<keyword id="KW-0067">ATP-binding</keyword>
<keyword id="KW-0963">Cytoplasm</keyword>
<keyword id="KW-0436">Ligase</keyword>
<keyword id="KW-0547">Nucleotide-binding</keyword>
<keyword id="KW-0648">Protein biosynthesis</keyword>
<evidence type="ECO:0000255" key="1">
    <source>
        <dbReference type="HAMAP-Rule" id="MF_00254"/>
    </source>
</evidence>
<feature type="chain" id="PRO_1000078523" description="Glycine--tRNA ligase alpha subunit">
    <location>
        <begin position="1"/>
        <end position="308"/>
    </location>
</feature>
<accession>B0CK89</accession>
<protein>
    <recommendedName>
        <fullName evidence="1">Glycine--tRNA ligase alpha subunit</fullName>
        <ecNumber evidence="1">6.1.1.14</ecNumber>
    </recommendedName>
    <alternativeName>
        <fullName evidence="1">Glycyl-tRNA synthetase alpha subunit</fullName>
        <shortName evidence="1">GlyRS</shortName>
    </alternativeName>
</protein>
<dbReference type="EC" id="6.1.1.14" evidence="1"/>
<dbReference type="EMBL" id="CP000911">
    <property type="protein sequence ID" value="ABY37519.1"/>
    <property type="molecule type" value="Genomic_DNA"/>
</dbReference>
<dbReference type="RefSeq" id="WP_004688025.1">
    <property type="nucleotide sequence ID" value="NC_010169.1"/>
</dbReference>
<dbReference type="SMR" id="B0CK89"/>
<dbReference type="KEGG" id="bmt:BSUIS_A0429"/>
<dbReference type="HOGENOM" id="CLU_057066_1_0_5"/>
<dbReference type="Proteomes" id="UP000008545">
    <property type="component" value="Chromosome I"/>
</dbReference>
<dbReference type="GO" id="GO:0005829">
    <property type="term" value="C:cytosol"/>
    <property type="evidence" value="ECO:0007669"/>
    <property type="project" value="TreeGrafter"/>
</dbReference>
<dbReference type="GO" id="GO:0005524">
    <property type="term" value="F:ATP binding"/>
    <property type="evidence" value="ECO:0007669"/>
    <property type="project" value="UniProtKB-UniRule"/>
</dbReference>
<dbReference type="GO" id="GO:0004820">
    <property type="term" value="F:glycine-tRNA ligase activity"/>
    <property type="evidence" value="ECO:0007669"/>
    <property type="project" value="UniProtKB-UniRule"/>
</dbReference>
<dbReference type="GO" id="GO:0006426">
    <property type="term" value="P:glycyl-tRNA aminoacylation"/>
    <property type="evidence" value="ECO:0007669"/>
    <property type="project" value="UniProtKB-UniRule"/>
</dbReference>
<dbReference type="CDD" id="cd00733">
    <property type="entry name" value="GlyRS_alpha_core"/>
    <property type="match status" value="1"/>
</dbReference>
<dbReference type="FunFam" id="3.30.930.10:FF:000006">
    <property type="entry name" value="Glycine--tRNA ligase alpha subunit"/>
    <property type="match status" value="1"/>
</dbReference>
<dbReference type="Gene3D" id="3.30.930.10">
    <property type="entry name" value="Bira Bifunctional Protein, Domain 2"/>
    <property type="match status" value="1"/>
</dbReference>
<dbReference type="Gene3D" id="1.20.58.180">
    <property type="entry name" value="Class II aaRS and biotin synthetases, domain 2"/>
    <property type="match status" value="1"/>
</dbReference>
<dbReference type="HAMAP" id="MF_00254">
    <property type="entry name" value="Gly_tRNA_synth_alpha"/>
    <property type="match status" value="1"/>
</dbReference>
<dbReference type="InterPro" id="IPR045864">
    <property type="entry name" value="aa-tRNA-synth_II/BPL/LPL"/>
</dbReference>
<dbReference type="InterPro" id="IPR006194">
    <property type="entry name" value="Gly-tRNA-synth_heterodimer"/>
</dbReference>
<dbReference type="InterPro" id="IPR002310">
    <property type="entry name" value="Gly-tRNA_ligase_asu"/>
</dbReference>
<dbReference type="NCBIfam" id="TIGR00388">
    <property type="entry name" value="glyQ"/>
    <property type="match status" value="1"/>
</dbReference>
<dbReference type="NCBIfam" id="NF006827">
    <property type="entry name" value="PRK09348.1"/>
    <property type="match status" value="1"/>
</dbReference>
<dbReference type="PANTHER" id="PTHR30075:SF2">
    <property type="entry name" value="GLYCINE--TRNA LIGASE, CHLOROPLASTIC_MITOCHONDRIAL 2"/>
    <property type="match status" value="1"/>
</dbReference>
<dbReference type="PANTHER" id="PTHR30075">
    <property type="entry name" value="GLYCYL-TRNA SYNTHETASE"/>
    <property type="match status" value="1"/>
</dbReference>
<dbReference type="Pfam" id="PF02091">
    <property type="entry name" value="tRNA-synt_2e"/>
    <property type="match status" value="1"/>
</dbReference>
<dbReference type="PRINTS" id="PR01044">
    <property type="entry name" value="TRNASYNTHGA"/>
</dbReference>
<dbReference type="SUPFAM" id="SSF55681">
    <property type="entry name" value="Class II aaRS and biotin synthetases"/>
    <property type="match status" value="1"/>
</dbReference>
<dbReference type="PROSITE" id="PS50861">
    <property type="entry name" value="AA_TRNA_LIGASE_II_GLYAB"/>
    <property type="match status" value="1"/>
</dbReference>